<reference key="1">
    <citation type="journal article" date="2006" name="Genome Res.">
        <title>Massive genome erosion and functional adaptations provide insights into the symbiotic lifestyle of Sodalis glossinidius in the tsetse host.</title>
        <authorList>
            <person name="Toh H."/>
            <person name="Weiss B.L."/>
            <person name="Perkin S.A.H."/>
            <person name="Yamashita A."/>
            <person name="Oshima K."/>
            <person name="Hattori M."/>
            <person name="Aksoy S."/>
        </authorList>
    </citation>
    <scope>NUCLEOTIDE SEQUENCE [LARGE SCALE GENOMIC DNA]</scope>
    <source>
        <strain>morsitans</strain>
    </source>
</reference>
<feature type="chain" id="PRO_0000300580" description="Protein AaeX">
    <location>
        <begin position="1"/>
        <end position="113"/>
    </location>
</feature>
<feature type="transmembrane region" description="Helical" evidence="1">
    <location>
        <begin position="3"/>
        <end position="23"/>
    </location>
</feature>
<feature type="transmembrane region" description="Helical" evidence="1">
    <location>
        <begin position="43"/>
        <end position="63"/>
    </location>
</feature>
<dbReference type="EMBL" id="AP008232">
    <property type="protein sequence ID" value="BAE73438.1"/>
    <property type="molecule type" value="Genomic_DNA"/>
</dbReference>
<dbReference type="SMR" id="Q2NWN7"/>
<dbReference type="STRING" id="343509.SG0163"/>
<dbReference type="KEGG" id="sgl:SG0163"/>
<dbReference type="eggNOG" id="ENOG5032YJX">
    <property type="taxonomic scope" value="Bacteria"/>
</dbReference>
<dbReference type="HOGENOM" id="CLU_2131884_0_0_6"/>
<dbReference type="OrthoDB" id="6080293at2"/>
<dbReference type="BioCyc" id="SGLO343509:SGP1_RS26235-MONOMER"/>
<dbReference type="Proteomes" id="UP000001932">
    <property type="component" value="Chromosome"/>
</dbReference>
<dbReference type="GO" id="GO:0005886">
    <property type="term" value="C:plasma membrane"/>
    <property type="evidence" value="ECO:0007669"/>
    <property type="project" value="UniProtKB-SubCell"/>
</dbReference>
<dbReference type="HAMAP" id="MF_01546">
    <property type="entry name" value="AaeX"/>
    <property type="match status" value="1"/>
</dbReference>
<dbReference type="InterPro" id="IPR012451">
    <property type="entry name" value="DUF1656"/>
</dbReference>
<dbReference type="NCBIfam" id="NF008615">
    <property type="entry name" value="PRK11594.1"/>
    <property type="match status" value="1"/>
</dbReference>
<dbReference type="Pfam" id="PF07869">
    <property type="entry name" value="DUF1656"/>
    <property type="match status" value="1"/>
</dbReference>
<proteinExistence type="inferred from homology"/>
<keyword id="KW-1003">Cell membrane</keyword>
<keyword id="KW-0472">Membrane</keyword>
<keyword id="KW-0812">Transmembrane</keyword>
<keyword id="KW-1133">Transmembrane helix</keyword>
<comment type="subcellular location">
    <subcellularLocation>
        <location evidence="1">Cell membrane</location>
        <topology evidence="1">Multi-pass membrane protein</topology>
    </subcellularLocation>
</comment>
<comment type="similarity">
    <text evidence="1">Belongs to the AaeX family.</text>
</comment>
<sequence>MSLLPVMVIFGLSFPPVLFEMILSLALFFALRRFLLPSGIYDFVWHPALFNTALYCCVFYLISCHSGADCRYRYFPCLVLLYRIALDAGRQIHRRCGGHCAGRQRPAQRRAYS</sequence>
<gene>
    <name evidence="1" type="primary">aaeX</name>
    <name type="ordered locus">SG0163</name>
</gene>
<evidence type="ECO:0000255" key="1">
    <source>
        <dbReference type="HAMAP-Rule" id="MF_01546"/>
    </source>
</evidence>
<organism>
    <name type="scientific">Sodalis glossinidius (strain morsitans)</name>
    <dbReference type="NCBI Taxonomy" id="343509"/>
    <lineage>
        <taxon>Bacteria</taxon>
        <taxon>Pseudomonadati</taxon>
        <taxon>Pseudomonadota</taxon>
        <taxon>Gammaproteobacteria</taxon>
        <taxon>Enterobacterales</taxon>
        <taxon>Bruguierivoracaceae</taxon>
        <taxon>Sodalis</taxon>
    </lineage>
</organism>
<accession>Q2NWN7</accession>
<name>AAEX_SODGM</name>
<protein>
    <recommendedName>
        <fullName evidence="1">Protein AaeX</fullName>
    </recommendedName>
</protein>